<organism>
    <name type="scientific">Corynebacterium aurimucosum (strain ATCC 700975 / DSM 44827 / CIP 107346 / CN-1)</name>
    <name type="common">Corynebacterium nigricans</name>
    <dbReference type="NCBI Taxonomy" id="548476"/>
    <lineage>
        <taxon>Bacteria</taxon>
        <taxon>Bacillati</taxon>
        <taxon>Actinomycetota</taxon>
        <taxon>Actinomycetes</taxon>
        <taxon>Mycobacteriales</taxon>
        <taxon>Corynebacteriaceae</taxon>
        <taxon>Corynebacterium</taxon>
    </lineage>
</organism>
<proteinExistence type="inferred from homology"/>
<keyword id="KW-0963">Cytoplasm</keyword>
<keyword id="KW-0488">Methylation</keyword>
<keyword id="KW-0648">Protein biosynthesis</keyword>
<keyword id="KW-1185">Reference proteome</keyword>
<accession>C3PES4</accession>
<evidence type="ECO:0000255" key="1">
    <source>
        <dbReference type="HAMAP-Rule" id="MF_00094"/>
    </source>
</evidence>
<evidence type="ECO:0000256" key="2">
    <source>
        <dbReference type="SAM" id="MobiDB-lite"/>
    </source>
</evidence>
<feature type="chain" id="PRO_1000193550" description="Peptide chain release factor 2">
    <location>
        <begin position="1"/>
        <end position="368"/>
    </location>
</feature>
<feature type="region of interest" description="Disordered" evidence="2">
    <location>
        <begin position="36"/>
        <end position="56"/>
    </location>
</feature>
<feature type="modified residue" description="N5-methylglutamine" evidence="1">
    <location>
        <position position="250"/>
    </location>
</feature>
<sequence length="368" mass="40946">MRPEQTARLEELSATLTSIEKVMDPEAVSERVRELEAQAGDPSLWDDPDHAQKVTSELSAQQAKLRKLNSLRGRIEDLPVMSELAEEEGDEASQELVETELKELGAAIESLEVTTMLSGEYDEREAVINIRSGAGGVDAADWAEMLMRMYTRWAEKNGHKVDVYDISYAEEAGIKSATFVVHGEYMYGQLSVEQGAHRLVRISPFDNQGRRQTSFAEVEVLPVVEQTDSIEVPDSEVRVDVYRSSGPGGQSVNTTDSAVRLTHIPTGIVVTCQNEKSQIQNKASAMRVLQAKLLERKRQEERAELDALGAGGNASWGNQMRSYVLHPYQMVKDLRTNYEVGDPSKVLDGDIDGFLESGIRWRMAQQEA</sequence>
<name>RF2_CORA7</name>
<protein>
    <recommendedName>
        <fullName evidence="1">Peptide chain release factor 2</fullName>
        <shortName evidence="1">RF-2</shortName>
    </recommendedName>
</protein>
<gene>
    <name evidence="1" type="primary">prfB</name>
    <name type="ordered locus">cauri_0731</name>
</gene>
<dbReference type="EMBL" id="CP001601">
    <property type="protein sequence ID" value="ACP32328.1"/>
    <property type="molecule type" value="Genomic_DNA"/>
</dbReference>
<dbReference type="RefSeq" id="WP_010189099.1">
    <property type="nucleotide sequence ID" value="NC_012590.1"/>
</dbReference>
<dbReference type="SMR" id="C3PES4"/>
<dbReference type="STRING" id="548476.cauri_0731"/>
<dbReference type="GeneID" id="31923355"/>
<dbReference type="KEGG" id="car:cauri_0731"/>
<dbReference type="eggNOG" id="COG1186">
    <property type="taxonomic scope" value="Bacteria"/>
</dbReference>
<dbReference type="HOGENOM" id="CLU_036856_6_0_11"/>
<dbReference type="OrthoDB" id="9806673at2"/>
<dbReference type="Proteomes" id="UP000002077">
    <property type="component" value="Chromosome"/>
</dbReference>
<dbReference type="GO" id="GO:0005737">
    <property type="term" value="C:cytoplasm"/>
    <property type="evidence" value="ECO:0007669"/>
    <property type="project" value="UniProtKB-SubCell"/>
</dbReference>
<dbReference type="GO" id="GO:0016149">
    <property type="term" value="F:translation release factor activity, codon specific"/>
    <property type="evidence" value="ECO:0007669"/>
    <property type="project" value="UniProtKB-UniRule"/>
</dbReference>
<dbReference type="FunFam" id="3.30.160.20:FF:000010">
    <property type="entry name" value="Peptide chain release factor 2"/>
    <property type="match status" value="1"/>
</dbReference>
<dbReference type="Gene3D" id="3.30.160.20">
    <property type="match status" value="1"/>
</dbReference>
<dbReference type="Gene3D" id="3.30.70.1660">
    <property type="match status" value="1"/>
</dbReference>
<dbReference type="Gene3D" id="1.20.58.410">
    <property type="entry name" value="Release factor"/>
    <property type="match status" value="1"/>
</dbReference>
<dbReference type="HAMAP" id="MF_00094">
    <property type="entry name" value="Rel_fac_2"/>
    <property type="match status" value="1"/>
</dbReference>
<dbReference type="InterPro" id="IPR005139">
    <property type="entry name" value="PCRF"/>
</dbReference>
<dbReference type="InterPro" id="IPR000352">
    <property type="entry name" value="Pep_chain_release_fac_I"/>
</dbReference>
<dbReference type="InterPro" id="IPR045853">
    <property type="entry name" value="Pep_chain_release_fac_I_sf"/>
</dbReference>
<dbReference type="InterPro" id="IPR004374">
    <property type="entry name" value="PrfB"/>
</dbReference>
<dbReference type="NCBIfam" id="TIGR00020">
    <property type="entry name" value="prfB"/>
    <property type="match status" value="1"/>
</dbReference>
<dbReference type="PANTHER" id="PTHR43116:SF3">
    <property type="entry name" value="CLASS I PEPTIDE CHAIN RELEASE FACTOR"/>
    <property type="match status" value="1"/>
</dbReference>
<dbReference type="PANTHER" id="PTHR43116">
    <property type="entry name" value="PEPTIDE CHAIN RELEASE FACTOR 2"/>
    <property type="match status" value="1"/>
</dbReference>
<dbReference type="Pfam" id="PF03462">
    <property type="entry name" value="PCRF"/>
    <property type="match status" value="1"/>
</dbReference>
<dbReference type="Pfam" id="PF00472">
    <property type="entry name" value="RF-1"/>
    <property type="match status" value="1"/>
</dbReference>
<dbReference type="SMART" id="SM00937">
    <property type="entry name" value="PCRF"/>
    <property type="match status" value="1"/>
</dbReference>
<dbReference type="SUPFAM" id="SSF75620">
    <property type="entry name" value="Release factor"/>
    <property type="match status" value="1"/>
</dbReference>
<dbReference type="PROSITE" id="PS00745">
    <property type="entry name" value="RF_PROK_I"/>
    <property type="match status" value="1"/>
</dbReference>
<reference key="1">
    <citation type="journal article" date="2010" name="BMC Genomics">
        <title>Complete genome sequence and lifestyle of black-pigmented Corynebacterium aurimucosum ATCC 700975 (formerly C. nigricans CN-1) isolated from a vaginal swab of a woman with spontaneous abortion.</title>
        <authorList>
            <person name="Trost E."/>
            <person name="Gotker S."/>
            <person name="Schneider J."/>
            <person name="Schneiker-Bekel S."/>
            <person name="Szczepanowski R."/>
            <person name="Tilker A."/>
            <person name="Viehoever P."/>
            <person name="Arnold W."/>
            <person name="Bekel T."/>
            <person name="Blom J."/>
            <person name="Gartemann K.H."/>
            <person name="Linke B."/>
            <person name="Goesmann A."/>
            <person name="Puhler A."/>
            <person name="Shukla S.K."/>
            <person name="Tauch A."/>
        </authorList>
    </citation>
    <scope>NUCLEOTIDE SEQUENCE [LARGE SCALE GENOMIC DNA]</scope>
    <source>
        <strain>ATCC 700975 / DSM 44827 / CIP 107346 / CN-1</strain>
    </source>
</reference>
<comment type="function">
    <text evidence="1">Peptide chain release factor 2 directs the termination of translation in response to the peptide chain termination codons UGA and UAA.</text>
</comment>
<comment type="subcellular location">
    <subcellularLocation>
        <location evidence="1">Cytoplasm</location>
    </subcellularLocation>
</comment>
<comment type="PTM">
    <text evidence="1">Methylated by PrmC. Methylation increases the termination efficiency of RF2.</text>
</comment>
<comment type="similarity">
    <text evidence="1">Belongs to the prokaryotic/mitochondrial release factor family.</text>
</comment>